<protein>
    <recommendedName>
        <fullName>Probable DNA helicase MCM9</fullName>
        <ecNumber>3.6.4.12</ecNumber>
    </recommendedName>
    <alternativeName>
        <fullName>Minichromosome maintenance 9</fullName>
        <shortName>AtMCM9</shortName>
    </alternativeName>
</protein>
<reference key="1">
    <citation type="journal article" date="1999" name="Nature">
        <title>Sequence and analysis of chromosome 2 of the plant Arabidopsis thaliana.</title>
        <authorList>
            <person name="Lin X."/>
            <person name="Kaul S."/>
            <person name="Rounsley S.D."/>
            <person name="Shea T.P."/>
            <person name="Benito M.-I."/>
            <person name="Town C.D."/>
            <person name="Fujii C.Y."/>
            <person name="Mason T.M."/>
            <person name="Bowman C.L."/>
            <person name="Barnstead M.E."/>
            <person name="Feldblyum T.V."/>
            <person name="Buell C.R."/>
            <person name="Ketchum K.A."/>
            <person name="Lee J.J."/>
            <person name="Ronning C.M."/>
            <person name="Koo H.L."/>
            <person name="Moffat K.S."/>
            <person name="Cronin L.A."/>
            <person name="Shen M."/>
            <person name="Pai G."/>
            <person name="Van Aken S."/>
            <person name="Umayam L."/>
            <person name="Tallon L.J."/>
            <person name="Gill J.E."/>
            <person name="Adams M.D."/>
            <person name="Carrera A.J."/>
            <person name="Creasy T.H."/>
            <person name="Goodman H.M."/>
            <person name="Somerville C.R."/>
            <person name="Copenhaver G.P."/>
            <person name="Preuss D."/>
            <person name="Nierman W.C."/>
            <person name="White O."/>
            <person name="Eisen J.A."/>
            <person name="Salzberg S.L."/>
            <person name="Fraser C.M."/>
            <person name="Venter J.C."/>
        </authorList>
    </citation>
    <scope>NUCLEOTIDE SEQUENCE [LARGE SCALE GENOMIC DNA]</scope>
    <source>
        <strain>cv. Columbia</strain>
    </source>
</reference>
<reference key="2">
    <citation type="journal article" date="2017" name="Plant J.">
        <title>Araport11: a complete reannotation of the Arabidopsis thaliana reference genome.</title>
        <authorList>
            <person name="Cheng C.Y."/>
            <person name="Krishnakumar V."/>
            <person name="Chan A.P."/>
            <person name="Thibaud-Nissen F."/>
            <person name="Schobel S."/>
            <person name="Town C.D."/>
        </authorList>
    </citation>
    <scope>GENOME REANNOTATION</scope>
    <source>
        <strain>cv. Columbia</strain>
    </source>
</reference>
<reference key="3">
    <citation type="journal article" date="2007" name="Plant Physiol.">
        <title>Genome-wide analysis of the core DNA replication machinery in the higher plants Arabidopsis and rice.</title>
        <authorList>
            <person name="Shultz R.W."/>
            <person name="Tatineni V.M."/>
            <person name="Hanley-Bowdoin L."/>
            <person name="Thompson W.F."/>
        </authorList>
    </citation>
    <scope>GENE FAMILY</scope>
</reference>
<organism>
    <name type="scientific">Arabidopsis thaliana</name>
    <name type="common">Mouse-ear cress</name>
    <dbReference type="NCBI Taxonomy" id="3702"/>
    <lineage>
        <taxon>Eukaryota</taxon>
        <taxon>Viridiplantae</taxon>
        <taxon>Streptophyta</taxon>
        <taxon>Embryophyta</taxon>
        <taxon>Tracheophyta</taxon>
        <taxon>Spermatophyta</taxon>
        <taxon>Magnoliopsida</taxon>
        <taxon>eudicotyledons</taxon>
        <taxon>Gunneridae</taxon>
        <taxon>Pentapetalae</taxon>
        <taxon>rosids</taxon>
        <taxon>malvids</taxon>
        <taxon>Brassicales</taxon>
        <taxon>Brassicaceae</taxon>
        <taxon>Camelineae</taxon>
        <taxon>Arabidopsis</taxon>
    </lineage>
</organism>
<dbReference type="EC" id="3.6.4.12"/>
<dbReference type="EMBL" id="AC006528">
    <property type="protein sequence ID" value="AAD19787.1"/>
    <property type="status" value="ALT_SEQ"/>
    <property type="molecule type" value="Genomic_DNA"/>
</dbReference>
<dbReference type="EMBL" id="CP002685">
    <property type="protein sequence ID" value="ANM63022.1"/>
    <property type="molecule type" value="Genomic_DNA"/>
</dbReference>
<dbReference type="PIR" id="E84513">
    <property type="entry name" value="E84513"/>
</dbReference>
<dbReference type="RefSeq" id="NP_179021.3">
    <property type="nucleotide sequence ID" value="NM_126977.4"/>
</dbReference>
<dbReference type="SMR" id="F4IFF3"/>
<dbReference type="BioGRID" id="1250">
    <property type="interactions" value="1"/>
</dbReference>
<dbReference type="FunCoup" id="F4IFF3">
    <property type="interactions" value="2242"/>
</dbReference>
<dbReference type="STRING" id="3702.F4IFF3"/>
<dbReference type="iPTMnet" id="F4IFF3"/>
<dbReference type="PaxDb" id="3702-AT2G14050.1"/>
<dbReference type="ProteomicsDB" id="250832"/>
<dbReference type="EnsemblPlants" id="AT2G14050.2">
    <property type="protein sequence ID" value="AT2G14050.2"/>
    <property type="gene ID" value="AT2G14050"/>
</dbReference>
<dbReference type="GeneID" id="815890"/>
<dbReference type="Gramene" id="AT2G14050.2">
    <property type="protein sequence ID" value="AT2G14050.2"/>
    <property type="gene ID" value="AT2G14050"/>
</dbReference>
<dbReference type="KEGG" id="ath:AT2G14050"/>
<dbReference type="Araport" id="AT2G14050"/>
<dbReference type="TAIR" id="AT2G14050">
    <property type="gene designation" value="MCM9"/>
</dbReference>
<dbReference type="eggNOG" id="KOG0477">
    <property type="taxonomic scope" value="Eukaryota"/>
</dbReference>
<dbReference type="HOGENOM" id="CLU_000995_7_2_1"/>
<dbReference type="InParanoid" id="F4IFF3"/>
<dbReference type="PRO" id="PR:F4IFF3"/>
<dbReference type="Proteomes" id="UP000006548">
    <property type="component" value="Chromosome 2"/>
</dbReference>
<dbReference type="ExpressionAtlas" id="F4IFF3">
    <property type="expression patterns" value="baseline and differential"/>
</dbReference>
<dbReference type="GO" id="GO:0005634">
    <property type="term" value="C:nucleus"/>
    <property type="evidence" value="ECO:0007669"/>
    <property type="project" value="UniProtKB-SubCell"/>
</dbReference>
<dbReference type="GO" id="GO:0005524">
    <property type="term" value="F:ATP binding"/>
    <property type="evidence" value="ECO:0007669"/>
    <property type="project" value="UniProtKB-KW"/>
</dbReference>
<dbReference type="GO" id="GO:0016887">
    <property type="term" value="F:ATP hydrolysis activity"/>
    <property type="evidence" value="ECO:0007669"/>
    <property type="project" value="InterPro"/>
</dbReference>
<dbReference type="GO" id="GO:0003677">
    <property type="term" value="F:DNA binding"/>
    <property type="evidence" value="ECO:0007669"/>
    <property type="project" value="UniProtKB-KW"/>
</dbReference>
<dbReference type="GO" id="GO:0004386">
    <property type="term" value="F:helicase activity"/>
    <property type="evidence" value="ECO:0007669"/>
    <property type="project" value="UniProtKB-KW"/>
</dbReference>
<dbReference type="GO" id="GO:0008270">
    <property type="term" value="F:zinc ion binding"/>
    <property type="evidence" value="ECO:0007669"/>
    <property type="project" value="UniProtKB-KW"/>
</dbReference>
<dbReference type="GO" id="GO:0006281">
    <property type="term" value="P:DNA repair"/>
    <property type="evidence" value="ECO:0007669"/>
    <property type="project" value="UniProtKB-KW"/>
</dbReference>
<dbReference type="GO" id="GO:0051321">
    <property type="term" value="P:meiotic cell cycle"/>
    <property type="evidence" value="ECO:0007669"/>
    <property type="project" value="UniProtKB-KW"/>
</dbReference>
<dbReference type="CDD" id="cd17760">
    <property type="entry name" value="MCM9"/>
    <property type="match status" value="1"/>
</dbReference>
<dbReference type="FunFam" id="3.40.50.300:FF:002270">
    <property type="entry name" value="Probable DNA helicase MCM9"/>
    <property type="match status" value="1"/>
</dbReference>
<dbReference type="Gene3D" id="2.20.28.10">
    <property type="match status" value="1"/>
</dbReference>
<dbReference type="Gene3D" id="3.30.1640.10">
    <property type="entry name" value="mini-chromosome maintenance (MCM) complex, chain A, domain 1"/>
    <property type="match status" value="1"/>
</dbReference>
<dbReference type="Gene3D" id="2.40.50.140">
    <property type="entry name" value="Nucleic acid-binding proteins"/>
    <property type="match status" value="1"/>
</dbReference>
<dbReference type="Gene3D" id="3.40.50.300">
    <property type="entry name" value="P-loop containing nucleotide triphosphate hydrolases"/>
    <property type="match status" value="1"/>
</dbReference>
<dbReference type="InterPro" id="IPR003593">
    <property type="entry name" value="AAA+_ATPase"/>
</dbReference>
<dbReference type="InterPro" id="IPR031327">
    <property type="entry name" value="MCM"/>
</dbReference>
<dbReference type="InterPro" id="IPR001208">
    <property type="entry name" value="MCM_dom"/>
</dbReference>
<dbReference type="InterPro" id="IPR041562">
    <property type="entry name" value="MCM_lid"/>
</dbReference>
<dbReference type="InterPro" id="IPR033762">
    <property type="entry name" value="MCM_OB"/>
</dbReference>
<dbReference type="InterPro" id="IPR012340">
    <property type="entry name" value="NA-bd_OB-fold"/>
</dbReference>
<dbReference type="InterPro" id="IPR027417">
    <property type="entry name" value="P-loop_NTPase"/>
</dbReference>
<dbReference type="PANTHER" id="PTHR11630:SF48">
    <property type="entry name" value="DNA HELICASE MCM9"/>
    <property type="match status" value="1"/>
</dbReference>
<dbReference type="PANTHER" id="PTHR11630">
    <property type="entry name" value="DNA REPLICATION LICENSING FACTOR MCM FAMILY MEMBER"/>
    <property type="match status" value="1"/>
</dbReference>
<dbReference type="Pfam" id="PF00493">
    <property type="entry name" value="MCM"/>
    <property type="match status" value="1"/>
</dbReference>
<dbReference type="Pfam" id="PF17855">
    <property type="entry name" value="MCM_lid"/>
    <property type="match status" value="1"/>
</dbReference>
<dbReference type="Pfam" id="PF17207">
    <property type="entry name" value="MCM_OB"/>
    <property type="match status" value="1"/>
</dbReference>
<dbReference type="PRINTS" id="PR01657">
    <property type="entry name" value="MCMFAMILY"/>
</dbReference>
<dbReference type="SMART" id="SM00382">
    <property type="entry name" value="AAA"/>
    <property type="match status" value="1"/>
</dbReference>
<dbReference type="SMART" id="SM00350">
    <property type="entry name" value="MCM"/>
    <property type="match status" value="1"/>
</dbReference>
<dbReference type="SUPFAM" id="SSF50249">
    <property type="entry name" value="Nucleic acid-binding proteins"/>
    <property type="match status" value="1"/>
</dbReference>
<dbReference type="SUPFAM" id="SSF52540">
    <property type="entry name" value="P-loop containing nucleoside triphosphate hydrolases"/>
    <property type="match status" value="1"/>
</dbReference>
<dbReference type="PROSITE" id="PS50051">
    <property type="entry name" value="MCM_2"/>
    <property type="match status" value="1"/>
</dbReference>
<accession>F4IFF3</accession>
<accession>Q9ZPT4</accession>
<keyword id="KW-0067">ATP-binding</keyword>
<keyword id="KW-0227">DNA damage</keyword>
<keyword id="KW-0234">DNA repair</keyword>
<keyword id="KW-0238">DNA-binding</keyword>
<keyword id="KW-0347">Helicase</keyword>
<keyword id="KW-0378">Hydrolase</keyword>
<keyword id="KW-0469">Meiosis</keyword>
<keyword id="KW-0479">Metal-binding</keyword>
<keyword id="KW-0547">Nucleotide-binding</keyword>
<keyword id="KW-0539">Nucleus</keyword>
<keyword id="KW-1185">Reference proteome</keyword>
<keyword id="KW-0862">Zinc</keyword>
<keyword id="KW-0863">Zinc-finger</keyword>
<proteinExistence type="inferred from homology"/>
<sequence>MESPTQTSEHIESMTEFLVKHYPDQLREISLSSDPKLHYPLFIEYAELVDDNPSLARQVFSDPEHYLRQFDDSAILAHKIALEHMKKFEEKIGIEKRFIHVRINTSGSPLERSPETFPSIGRVRVKHRGILMMLKGTVIRSGAVKMYEGEKMYRCRKCKHMFPIFPELESINSIVKPPFCPSQRSKACEGTNFDPVDDTVTRHDYQEIKIQENTQVLGVGVIPRSILVVLKDDLVDNVKAGDDVVVSGILTSKWSHDLKDVRCDLEPMLIANHVRRTNELKSEIDISDDLIEKFKNFWSHFRDTPLKGRNAILRGICPQVFGLFTVKLAVALTLIGGVQHVDASGTKVRGESHLLLIGDPGTGKSQFLKFAAKLSNRAVITTGLGSTSAGLTVTAVKDGGEWMLEAGALVLADGGLCCIDEFDSMREHDRATIHEAMEQQSISVAKAGLVTTLSTKTIVFGATNPKGQYDPDQSLSVNTALSGPLLSRFDIVLVLLDTKNPEWDAVVSSHILAEVQIEQDREVDDLTTIWPLPMLQRYIQFVKKNFRPVLSKEAEEIISSYYRLQRRSSTHNAARTTVRMLESLIRLAQAHARLMFRNEVTRLDAITAILCIESSMTISAIVDSMGNALHSNFSEEPDQECILFRH</sequence>
<evidence type="ECO:0000250" key="1"/>
<evidence type="ECO:0000255" key="2"/>
<evidence type="ECO:0000305" key="3"/>
<gene>
    <name type="primary">MCM9</name>
    <name type="ordered locus">At2g14050</name>
    <name type="ORF">F9B22</name>
</gene>
<comment type="function">
    <text evidence="1">Probable DNA helicase that may play a role in DNA repair during meiosis.</text>
</comment>
<comment type="catalytic activity">
    <reaction>
        <text>ATP + H2O = ADP + phosphate + H(+)</text>
        <dbReference type="Rhea" id="RHEA:13065"/>
        <dbReference type="ChEBI" id="CHEBI:15377"/>
        <dbReference type="ChEBI" id="CHEBI:15378"/>
        <dbReference type="ChEBI" id="CHEBI:30616"/>
        <dbReference type="ChEBI" id="CHEBI:43474"/>
        <dbReference type="ChEBI" id="CHEBI:456216"/>
        <dbReference type="EC" id="3.6.4.12"/>
    </reaction>
</comment>
<comment type="subcellular location">
    <subcellularLocation>
        <location evidence="3">Nucleus</location>
    </subcellularLocation>
</comment>
<comment type="similarity">
    <text evidence="3">Belongs to the MCM family.</text>
</comment>
<comment type="sequence caution" evidence="3">
    <conflict type="erroneous gene model prediction">
        <sequence resource="EMBL-CDS" id="AAD19787"/>
    </conflict>
</comment>
<name>MCM9_ARATH</name>
<feature type="chain" id="PRO_0000426004" description="Probable DNA helicase MCM9">
    <location>
        <begin position="1"/>
        <end position="646"/>
    </location>
</feature>
<feature type="domain" description="MCM">
    <location>
        <begin position="308"/>
        <end position="511"/>
    </location>
</feature>
<feature type="zinc finger region" description="C4-type" evidence="2">
    <location>
        <begin position="155"/>
        <end position="188"/>
    </location>
</feature>
<feature type="short sequence motif" description="Arginine finger">
    <location>
        <begin position="487"/>
        <end position="490"/>
    </location>
</feature>
<feature type="binding site" evidence="1">
    <location>
        <begin position="358"/>
        <end position="365"/>
    </location>
    <ligand>
        <name>ATP</name>
        <dbReference type="ChEBI" id="CHEBI:30616"/>
    </ligand>
</feature>